<sequence length="436" mass="49451">MTILALGINHKTASVNLRSKVAFDDQKRQLAFEQIQHRALAESVVILSTCNRTELYFHNAEITPREEHEDNIAWREQCFEWFAEIHQLEHNELRECIYFKQNMEAARHLMRVACGLDSLILGEPQILGQVKQAYQYSENFYQSQNSHISTKLSRLFQRTFSTAKRVRSETEIGSSAVSVAYAACGLARQIFDNFGKLRFLLVGAGETIELVARYLIQHGAKNIMIANRTPQRAETLAERLNTPMQILSLSALQIGLNQADIVISSTGSPDMLISKEMVEIAQKQRQFDPMLLIDIAVPRDIDENAGELDAVYSYSVDDLQHIIQRNMAQREQAAEQAAQIVDEECKAFFEWLKQQQSSDLIKRYRQDAEQTRQELLAKALVALTSGQDSEKVLNELSYKLTNSLLHVPTQALQAMAKSGNSQGLQSFSKALKLEEQ</sequence>
<protein>
    <recommendedName>
        <fullName evidence="1">Glutamyl-tRNA reductase</fullName>
        <shortName evidence="1">GluTR</shortName>
        <ecNumber evidence="1">1.2.1.70</ecNumber>
    </recommendedName>
</protein>
<gene>
    <name evidence="1" type="primary">hemA</name>
    <name type="ordered locus">APJL_0425</name>
</gene>
<feature type="chain" id="PRO_1000093111" description="Glutamyl-tRNA reductase">
    <location>
        <begin position="1"/>
        <end position="436"/>
    </location>
</feature>
<feature type="active site" description="Nucleophile" evidence="1">
    <location>
        <position position="50"/>
    </location>
</feature>
<feature type="binding site" evidence="1">
    <location>
        <begin position="49"/>
        <end position="52"/>
    </location>
    <ligand>
        <name>substrate</name>
    </ligand>
</feature>
<feature type="binding site" evidence="1">
    <location>
        <position position="118"/>
    </location>
    <ligand>
        <name>substrate</name>
    </ligand>
</feature>
<feature type="binding site" evidence="1">
    <location>
        <begin position="123"/>
        <end position="125"/>
    </location>
    <ligand>
        <name>substrate</name>
    </ligand>
</feature>
<feature type="binding site" evidence="1">
    <location>
        <position position="129"/>
    </location>
    <ligand>
        <name>substrate</name>
    </ligand>
</feature>
<feature type="binding site" evidence="1">
    <location>
        <begin position="203"/>
        <end position="208"/>
    </location>
    <ligand>
        <name>NADP(+)</name>
        <dbReference type="ChEBI" id="CHEBI:58349"/>
    </ligand>
</feature>
<feature type="site" description="Important for activity" evidence="1">
    <location>
        <position position="108"/>
    </location>
</feature>
<name>HEM1_ACTPJ</name>
<comment type="function">
    <text evidence="1">Catalyzes the NADPH-dependent reduction of glutamyl-tRNA(Glu) to glutamate 1-semialdehyde (GSA).</text>
</comment>
<comment type="catalytic activity">
    <reaction evidence="1">
        <text>(S)-4-amino-5-oxopentanoate + tRNA(Glu) + NADP(+) = L-glutamyl-tRNA(Glu) + NADPH + H(+)</text>
        <dbReference type="Rhea" id="RHEA:12344"/>
        <dbReference type="Rhea" id="RHEA-COMP:9663"/>
        <dbReference type="Rhea" id="RHEA-COMP:9680"/>
        <dbReference type="ChEBI" id="CHEBI:15378"/>
        <dbReference type="ChEBI" id="CHEBI:57501"/>
        <dbReference type="ChEBI" id="CHEBI:57783"/>
        <dbReference type="ChEBI" id="CHEBI:58349"/>
        <dbReference type="ChEBI" id="CHEBI:78442"/>
        <dbReference type="ChEBI" id="CHEBI:78520"/>
        <dbReference type="EC" id="1.2.1.70"/>
    </reaction>
</comment>
<comment type="pathway">
    <text evidence="1">Porphyrin-containing compound metabolism; protoporphyrin-IX biosynthesis; 5-aminolevulinate from L-glutamyl-tRNA(Glu): step 1/2.</text>
</comment>
<comment type="subunit">
    <text evidence="1">Homodimer.</text>
</comment>
<comment type="domain">
    <text evidence="1">Possesses an unusual extended V-shaped dimeric structure with each monomer consisting of three distinct domains arranged along a curved 'spinal' alpha-helix. The N-terminal catalytic domain specifically recognizes the glutamate moiety of the substrate. The second domain is the NADPH-binding domain, and the third C-terminal domain is responsible for dimerization.</text>
</comment>
<comment type="miscellaneous">
    <text evidence="1">During catalysis, the active site Cys acts as a nucleophile attacking the alpha-carbonyl group of tRNA-bound glutamate with the formation of a thioester intermediate between enzyme and glutamate, and the concomitant release of tRNA(Glu). The thioester intermediate is finally reduced by direct hydride transfer from NADPH, to form the product GSA.</text>
</comment>
<comment type="similarity">
    <text evidence="1">Belongs to the glutamyl-tRNA reductase family.</text>
</comment>
<organism>
    <name type="scientific">Actinobacillus pleuropneumoniae serotype 3 (strain JL03)</name>
    <dbReference type="NCBI Taxonomy" id="434271"/>
    <lineage>
        <taxon>Bacteria</taxon>
        <taxon>Pseudomonadati</taxon>
        <taxon>Pseudomonadota</taxon>
        <taxon>Gammaproteobacteria</taxon>
        <taxon>Pasteurellales</taxon>
        <taxon>Pasteurellaceae</taxon>
        <taxon>Actinobacillus</taxon>
    </lineage>
</organism>
<evidence type="ECO:0000255" key="1">
    <source>
        <dbReference type="HAMAP-Rule" id="MF_00087"/>
    </source>
</evidence>
<keyword id="KW-0521">NADP</keyword>
<keyword id="KW-0560">Oxidoreductase</keyword>
<keyword id="KW-0627">Porphyrin biosynthesis</keyword>
<reference key="1">
    <citation type="journal article" date="2008" name="PLoS ONE">
        <title>Genome biology of Actinobacillus pleuropneumoniae JL03, an isolate of serotype 3 prevalent in China.</title>
        <authorList>
            <person name="Xu Z."/>
            <person name="Zhou Y."/>
            <person name="Li L."/>
            <person name="Zhou R."/>
            <person name="Xiao S."/>
            <person name="Wan Y."/>
            <person name="Zhang S."/>
            <person name="Wang K."/>
            <person name="Li W."/>
            <person name="Li L."/>
            <person name="Jin H."/>
            <person name="Kang M."/>
            <person name="Dalai B."/>
            <person name="Li T."/>
            <person name="Liu L."/>
            <person name="Cheng Y."/>
            <person name="Zhang L."/>
            <person name="Xu T."/>
            <person name="Zheng H."/>
            <person name="Pu S."/>
            <person name="Wang B."/>
            <person name="Gu W."/>
            <person name="Zhang X.L."/>
            <person name="Zhu G.-F."/>
            <person name="Wang S."/>
            <person name="Zhao G.-P."/>
            <person name="Chen H."/>
        </authorList>
    </citation>
    <scope>NUCLEOTIDE SEQUENCE [LARGE SCALE GENOMIC DNA]</scope>
    <source>
        <strain>JL03</strain>
    </source>
</reference>
<accession>B0BTQ9</accession>
<proteinExistence type="inferred from homology"/>
<dbReference type="EC" id="1.2.1.70" evidence="1"/>
<dbReference type="EMBL" id="CP000687">
    <property type="protein sequence ID" value="ABY69014.1"/>
    <property type="molecule type" value="Genomic_DNA"/>
</dbReference>
<dbReference type="RefSeq" id="WP_005596438.1">
    <property type="nucleotide sequence ID" value="NC_010278.1"/>
</dbReference>
<dbReference type="SMR" id="B0BTQ9"/>
<dbReference type="GeneID" id="48598572"/>
<dbReference type="KEGG" id="apj:APJL_0425"/>
<dbReference type="HOGENOM" id="CLU_035113_2_2_6"/>
<dbReference type="UniPathway" id="UPA00251">
    <property type="reaction ID" value="UER00316"/>
</dbReference>
<dbReference type="Proteomes" id="UP000008547">
    <property type="component" value="Chromosome"/>
</dbReference>
<dbReference type="GO" id="GO:0008883">
    <property type="term" value="F:glutamyl-tRNA reductase activity"/>
    <property type="evidence" value="ECO:0007669"/>
    <property type="project" value="UniProtKB-UniRule"/>
</dbReference>
<dbReference type="GO" id="GO:0050661">
    <property type="term" value="F:NADP binding"/>
    <property type="evidence" value="ECO:0007669"/>
    <property type="project" value="InterPro"/>
</dbReference>
<dbReference type="GO" id="GO:0019353">
    <property type="term" value="P:protoporphyrinogen IX biosynthetic process from glutamate"/>
    <property type="evidence" value="ECO:0007669"/>
    <property type="project" value="TreeGrafter"/>
</dbReference>
<dbReference type="CDD" id="cd05213">
    <property type="entry name" value="NAD_bind_Glutamyl_tRNA_reduct"/>
    <property type="match status" value="1"/>
</dbReference>
<dbReference type="FunFam" id="3.30.460.30:FF:000001">
    <property type="entry name" value="Glutamyl-tRNA reductase"/>
    <property type="match status" value="1"/>
</dbReference>
<dbReference type="FunFam" id="3.40.50.720:FF:000031">
    <property type="entry name" value="Glutamyl-tRNA reductase"/>
    <property type="match status" value="1"/>
</dbReference>
<dbReference type="Gene3D" id="3.30.460.30">
    <property type="entry name" value="Glutamyl-tRNA reductase, N-terminal domain"/>
    <property type="match status" value="1"/>
</dbReference>
<dbReference type="Gene3D" id="3.40.50.720">
    <property type="entry name" value="NAD(P)-binding Rossmann-like Domain"/>
    <property type="match status" value="1"/>
</dbReference>
<dbReference type="HAMAP" id="MF_00087">
    <property type="entry name" value="Glu_tRNA_reductase"/>
    <property type="match status" value="1"/>
</dbReference>
<dbReference type="InterPro" id="IPR000343">
    <property type="entry name" value="4pyrrol_synth_GluRdtase"/>
</dbReference>
<dbReference type="InterPro" id="IPR015896">
    <property type="entry name" value="4pyrrol_synth_GluRdtase_dimer"/>
</dbReference>
<dbReference type="InterPro" id="IPR015895">
    <property type="entry name" value="4pyrrol_synth_GluRdtase_N"/>
</dbReference>
<dbReference type="InterPro" id="IPR018214">
    <property type="entry name" value="GluRdtase_CS"/>
</dbReference>
<dbReference type="InterPro" id="IPR036453">
    <property type="entry name" value="GluRdtase_dimer_dom_sf"/>
</dbReference>
<dbReference type="InterPro" id="IPR036343">
    <property type="entry name" value="GluRdtase_N_sf"/>
</dbReference>
<dbReference type="InterPro" id="IPR036291">
    <property type="entry name" value="NAD(P)-bd_dom_sf"/>
</dbReference>
<dbReference type="InterPro" id="IPR006151">
    <property type="entry name" value="Shikm_DH/Glu-tRNA_Rdtase"/>
</dbReference>
<dbReference type="NCBIfam" id="TIGR01035">
    <property type="entry name" value="hemA"/>
    <property type="match status" value="1"/>
</dbReference>
<dbReference type="PANTHER" id="PTHR43013">
    <property type="entry name" value="GLUTAMYL-TRNA REDUCTASE"/>
    <property type="match status" value="1"/>
</dbReference>
<dbReference type="PANTHER" id="PTHR43013:SF1">
    <property type="entry name" value="GLUTAMYL-TRNA REDUCTASE"/>
    <property type="match status" value="1"/>
</dbReference>
<dbReference type="Pfam" id="PF00745">
    <property type="entry name" value="GlutR_dimer"/>
    <property type="match status" value="1"/>
</dbReference>
<dbReference type="Pfam" id="PF05201">
    <property type="entry name" value="GlutR_N"/>
    <property type="match status" value="1"/>
</dbReference>
<dbReference type="Pfam" id="PF01488">
    <property type="entry name" value="Shikimate_DH"/>
    <property type="match status" value="1"/>
</dbReference>
<dbReference type="PIRSF" id="PIRSF000445">
    <property type="entry name" value="4pyrrol_synth_GluRdtase"/>
    <property type="match status" value="1"/>
</dbReference>
<dbReference type="SUPFAM" id="SSF69742">
    <property type="entry name" value="Glutamyl tRNA-reductase catalytic, N-terminal domain"/>
    <property type="match status" value="1"/>
</dbReference>
<dbReference type="SUPFAM" id="SSF69075">
    <property type="entry name" value="Glutamyl tRNA-reductase dimerization domain"/>
    <property type="match status" value="1"/>
</dbReference>
<dbReference type="SUPFAM" id="SSF51735">
    <property type="entry name" value="NAD(P)-binding Rossmann-fold domains"/>
    <property type="match status" value="1"/>
</dbReference>
<dbReference type="PROSITE" id="PS00747">
    <property type="entry name" value="GLUTR"/>
    <property type="match status" value="1"/>
</dbReference>